<feature type="peptide" id="PRO_0000461760" description="Cryptide Pep-25" evidence="1">
    <location>
        <begin position="1"/>
        <end position="5"/>
    </location>
</feature>
<feature type="unsure residue" description="K or Q" evidence="3">
    <location>
        <position position="1"/>
    </location>
</feature>
<keyword id="KW-0903">Direct protein sequencing</keyword>
<keyword id="KW-0964">Secreted</keyword>
<reference key="1">
    <citation type="journal article" date="2018" name="J. Proteomics">
        <title>Profiling the short, linear, non-disulfide bond-containing peptidome from the venom of the scorpion Tityus obscurus.</title>
        <authorList>
            <person name="Dias N.B."/>
            <person name="de Souza B.M."/>
            <person name="Cocchi F.K."/>
            <person name="Chalkidis H.M."/>
            <person name="Dorce V.A.C."/>
            <person name="Palma M.S."/>
        </authorList>
    </citation>
    <scope>PROTEIN SEQUENCE</scope>
    <scope>IDENTIFICATION BY MASS SPECTROMETRY</scope>
    <scope>MASS SPECTROMETRY</scope>
    <scope>SUBCELLULAR LOCATION</scope>
    <source>
        <tissue>Venom</tissue>
    </source>
</reference>
<accession>P0DRH0</accession>
<protein>
    <recommendedName>
        <fullName evidence="2">Cryptide Pep-25</fullName>
    </recommendedName>
</protein>
<sequence length="5" mass="499">KPVVG</sequence>
<name>CRY25_TITOB</name>
<comment type="subcellular location">
    <subcellularLocation>
        <location evidence="1">Secreted</location>
    </subcellularLocation>
</comment>
<comment type="tissue specificity">
    <text evidence="3">Expressed by the venom gland.</text>
</comment>
<comment type="mass spectrometry" mass="498.31" method="Electrospray" evidence="1"/>
<evidence type="ECO:0000269" key="1">
    <source>
    </source>
</evidence>
<evidence type="ECO:0000303" key="2">
    <source>
    </source>
</evidence>
<evidence type="ECO:0000305" key="3">
    <source>
    </source>
</evidence>
<dbReference type="GO" id="GO:0005576">
    <property type="term" value="C:extracellular region"/>
    <property type="evidence" value="ECO:0007669"/>
    <property type="project" value="UniProtKB-SubCell"/>
</dbReference>
<organism>
    <name type="scientific">Tityus obscurus</name>
    <name type="common">Amazonian scorpion</name>
    <name type="synonym">Tityus cambridgei</name>
    <dbReference type="NCBI Taxonomy" id="1221240"/>
    <lineage>
        <taxon>Eukaryota</taxon>
        <taxon>Metazoa</taxon>
        <taxon>Ecdysozoa</taxon>
        <taxon>Arthropoda</taxon>
        <taxon>Chelicerata</taxon>
        <taxon>Arachnida</taxon>
        <taxon>Scorpiones</taxon>
        <taxon>Buthida</taxon>
        <taxon>Buthoidea</taxon>
        <taxon>Buthidae</taxon>
        <taxon>Tityus</taxon>
    </lineage>
</organism>
<proteinExistence type="evidence at protein level"/>